<reference key="1">
    <citation type="journal article" date="2005" name="Science">
        <title>The transcriptional landscape of the mammalian genome.</title>
        <authorList>
            <person name="Carninci P."/>
            <person name="Kasukawa T."/>
            <person name="Katayama S."/>
            <person name="Gough J."/>
            <person name="Frith M.C."/>
            <person name="Maeda N."/>
            <person name="Oyama R."/>
            <person name="Ravasi T."/>
            <person name="Lenhard B."/>
            <person name="Wells C."/>
            <person name="Kodzius R."/>
            <person name="Shimokawa K."/>
            <person name="Bajic V.B."/>
            <person name="Brenner S.E."/>
            <person name="Batalov S."/>
            <person name="Forrest A.R."/>
            <person name="Zavolan M."/>
            <person name="Davis M.J."/>
            <person name="Wilming L.G."/>
            <person name="Aidinis V."/>
            <person name="Allen J.E."/>
            <person name="Ambesi-Impiombato A."/>
            <person name="Apweiler R."/>
            <person name="Aturaliya R.N."/>
            <person name="Bailey T.L."/>
            <person name="Bansal M."/>
            <person name="Baxter L."/>
            <person name="Beisel K.W."/>
            <person name="Bersano T."/>
            <person name="Bono H."/>
            <person name="Chalk A.M."/>
            <person name="Chiu K.P."/>
            <person name="Choudhary V."/>
            <person name="Christoffels A."/>
            <person name="Clutterbuck D.R."/>
            <person name="Crowe M.L."/>
            <person name="Dalla E."/>
            <person name="Dalrymple B.P."/>
            <person name="de Bono B."/>
            <person name="Della Gatta G."/>
            <person name="di Bernardo D."/>
            <person name="Down T."/>
            <person name="Engstrom P."/>
            <person name="Fagiolini M."/>
            <person name="Faulkner G."/>
            <person name="Fletcher C.F."/>
            <person name="Fukushima T."/>
            <person name="Furuno M."/>
            <person name="Futaki S."/>
            <person name="Gariboldi M."/>
            <person name="Georgii-Hemming P."/>
            <person name="Gingeras T.R."/>
            <person name="Gojobori T."/>
            <person name="Green R.E."/>
            <person name="Gustincich S."/>
            <person name="Harbers M."/>
            <person name="Hayashi Y."/>
            <person name="Hensch T.K."/>
            <person name="Hirokawa N."/>
            <person name="Hill D."/>
            <person name="Huminiecki L."/>
            <person name="Iacono M."/>
            <person name="Ikeo K."/>
            <person name="Iwama A."/>
            <person name="Ishikawa T."/>
            <person name="Jakt M."/>
            <person name="Kanapin A."/>
            <person name="Katoh M."/>
            <person name="Kawasawa Y."/>
            <person name="Kelso J."/>
            <person name="Kitamura H."/>
            <person name="Kitano H."/>
            <person name="Kollias G."/>
            <person name="Krishnan S.P."/>
            <person name="Kruger A."/>
            <person name="Kummerfeld S.K."/>
            <person name="Kurochkin I.V."/>
            <person name="Lareau L.F."/>
            <person name="Lazarevic D."/>
            <person name="Lipovich L."/>
            <person name="Liu J."/>
            <person name="Liuni S."/>
            <person name="McWilliam S."/>
            <person name="Madan Babu M."/>
            <person name="Madera M."/>
            <person name="Marchionni L."/>
            <person name="Matsuda H."/>
            <person name="Matsuzawa S."/>
            <person name="Miki H."/>
            <person name="Mignone F."/>
            <person name="Miyake S."/>
            <person name="Morris K."/>
            <person name="Mottagui-Tabar S."/>
            <person name="Mulder N."/>
            <person name="Nakano N."/>
            <person name="Nakauchi H."/>
            <person name="Ng P."/>
            <person name="Nilsson R."/>
            <person name="Nishiguchi S."/>
            <person name="Nishikawa S."/>
            <person name="Nori F."/>
            <person name="Ohara O."/>
            <person name="Okazaki Y."/>
            <person name="Orlando V."/>
            <person name="Pang K.C."/>
            <person name="Pavan W.J."/>
            <person name="Pavesi G."/>
            <person name="Pesole G."/>
            <person name="Petrovsky N."/>
            <person name="Piazza S."/>
            <person name="Reed J."/>
            <person name="Reid J.F."/>
            <person name="Ring B.Z."/>
            <person name="Ringwald M."/>
            <person name="Rost B."/>
            <person name="Ruan Y."/>
            <person name="Salzberg S.L."/>
            <person name="Sandelin A."/>
            <person name="Schneider C."/>
            <person name="Schoenbach C."/>
            <person name="Sekiguchi K."/>
            <person name="Semple C.A."/>
            <person name="Seno S."/>
            <person name="Sessa L."/>
            <person name="Sheng Y."/>
            <person name="Shibata Y."/>
            <person name="Shimada H."/>
            <person name="Shimada K."/>
            <person name="Silva D."/>
            <person name="Sinclair B."/>
            <person name="Sperling S."/>
            <person name="Stupka E."/>
            <person name="Sugiura K."/>
            <person name="Sultana R."/>
            <person name="Takenaka Y."/>
            <person name="Taki K."/>
            <person name="Tammoja K."/>
            <person name="Tan S.L."/>
            <person name="Tang S."/>
            <person name="Taylor M.S."/>
            <person name="Tegner J."/>
            <person name="Teichmann S.A."/>
            <person name="Ueda H.R."/>
            <person name="van Nimwegen E."/>
            <person name="Verardo R."/>
            <person name="Wei C.L."/>
            <person name="Yagi K."/>
            <person name="Yamanishi H."/>
            <person name="Zabarovsky E."/>
            <person name="Zhu S."/>
            <person name="Zimmer A."/>
            <person name="Hide W."/>
            <person name="Bult C."/>
            <person name="Grimmond S.M."/>
            <person name="Teasdale R.D."/>
            <person name="Liu E.T."/>
            <person name="Brusic V."/>
            <person name="Quackenbush J."/>
            <person name="Wahlestedt C."/>
            <person name="Mattick J.S."/>
            <person name="Hume D.A."/>
            <person name="Kai C."/>
            <person name="Sasaki D."/>
            <person name="Tomaru Y."/>
            <person name="Fukuda S."/>
            <person name="Kanamori-Katayama M."/>
            <person name="Suzuki M."/>
            <person name="Aoki J."/>
            <person name="Arakawa T."/>
            <person name="Iida J."/>
            <person name="Imamura K."/>
            <person name="Itoh M."/>
            <person name="Kato T."/>
            <person name="Kawaji H."/>
            <person name="Kawagashira N."/>
            <person name="Kawashima T."/>
            <person name="Kojima M."/>
            <person name="Kondo S."/>
            <person name="Konno H."/>
            <person name="Nakano K."/>
            <person name="Ninomiya N."/>
            <person name="Nishio T."/>
            <person name="Okada M."/>
            <person name="Plessy C."/>
            <person name="Shibata K."/>
            <person name="Shiraki T."/>
            <person name="Suzuki S."/>
            <person name="Tagami M."/>
            <person name="Waki K."/>
            <person name="Watahiki A."/>
            <person name="Okamura-Oho Y."/>
            <person name="Suzuki H."/>
            <person name="Kawai J."/>
            <person name="Hayashizaki Y."/>
        </authorList>
    </citation>
    <scope>NUCLEOTIDE SEQUENCE [LARGE SCALE MRNA] (ISOFORMS 2 AND 3)</scope>
    <source>
        <strain>C57BL/6J</strain>
        <tissue>Mammary gland</tissue>
        <tissue>Spleen</tissue>
    </source>
</reference>
<reference key="2">
    <citation type="journal article" date="2009" name="PLoS Biol.">
        <title>Lineage-specific biology revealed by a finished genome assembly of the mouse.</title>
        <authorList>
            <person name="Church D.M."/>
            <person name="Goodstadt L."/>
            <person name="Hillier L.W."/>
            <person name="Zody M.C."/>
            <person name="Goldstein S."/>
            <person name="She X."/>
            <person name="Bult C.J."/>
            <person name="Agarwala R."/>
            <person name="Cherry J.L."/>
            <person name="DiCuccio M."/>
            <person name="Hlavina W."/>
            <person name="Kapustin Y."/>
            <person name="Meric P."/>
            <person name="Maglott D."/>
            <person name="Birtle Z."/>
            <person name="Marques A.C."/>
            <person name="Graves T."/>
            <person name="Zhou S."/>
            <person name="Teague B."/>
            <person name="Potamousis K."/>
            <person name="Churas C."/>
            <person name="Place M."/>
            <person name="Herschleb J."/>
            <person name="Runnheim R."/>
            <person name="Forrest D."/>
            <person name="Amos-Landgraf J."/>
            <person name="Schwartz D.C."/>
            <person name="Cheng Z."/>
            <person name="Lindblad-Toh K."/>
            <person name="Eichler E.E."/>
            <person name="Ponting C.P."/>
        </authorList>
    </citation>
    <scope>NUCLEOTIDE SEQUENCE [LARGE SCALE GENOMIC DNA]</scope>
    <source>
        <strain>C57BL/6J</strain>
    </source>
</reference>
<reference key="3">
    <citation type="journal article" date="2010" name="Cell">
        <title>A tissue-specific atlas of mouse protein phosphorylation and expression.</title>
        <authorList>
            <person name="Huttlin E.L."/>
            <person name="Jedrychowski M.P."/>
            <person name="Elias J.E."/>
            <person name="Goswami T."/>
            <person name="Rad R."/>
            <person name="Beausoleil S.A."/>
            <person name="Villen J."/>
            <person name="Haas W."/>
            <person name="Sowa M.E."/>
            <person name="Gygi S.P."/>
        </authorList>
    </citation>
    <scope>IDENTIFICATION BY MASS SPECTROMETRY [LARGE SCALE ANALYSIS]</scope>
    <source>
        <tissue>Spleen</tissue>
        <tissue>Testis</tissue>
    </source>
</reference>
<reference key="4">
    <citation type="journal article" date="2018" name="Proc. Natl. Acad. Sci. U.S.A.">
        <title>Dysregulation of cotranscriptional alternative splicing underlies CHARGE syndrome.</title>
        <authorList>
            <person name="Belanger C."/>
            <person name="Berube-Simard F.A."/>
            <person name="Leduc E."/>
            <person name="Bernas G."/>
            <person name="Campeau P.M."/>
            <person name="Lalani S.R."/>
            <person name="Martin D.M."/>
            <person name="Bielas S."/>
            <person name="Moccia A."/>
            <person name="Srivastava A."/>
            <person name="Silversides D.W."/>
            <person name="Pilon N."/>
        </authorList>
    </citation>
    <scope>SUBCELLULAR LOCATION</scope>
    <scope>DEVELOPMENTAL STAGE</scope>
    <scope>FUNCTION</scope>
    <scope>MUTAGENESIS OF GLU-229; SER-294 AND 307-ARG--LEU-417</scope>
    <scope>INTERACTION WITH AGO2</scope>
    <scope>DISRUPTION PHENOTYPE</scope>
    <scope>IDENTIFICATION IN A COMPLEX WITH ARB2A; AGO2 AND CHD7</scope>
</reference>
<sequence>MSISLSSLIFLPIWINMAQMQQGGSNETEQTAALKDLLSRIDLDELMKKDEPPFDFPDTLEGFEYAFNEKGQLRHIKTGEPFVFNYREDLHRWNQKRYEALGEIITRYVYELLESDCNLKKISIPVDATESEPKSFIFMSEDALTNPQKLMVLIHGSGVVRAGQWARRLIINEDLDSGTQIPFIKRAMDEGYGVIVLNPNENYIEVEKQKMHKQSSSSDGTDEPAGKRERRDKVSKETKKRRDFYEKYRNPQKEKEMMQLFIRENGSPEEHAVYVWDHFIAQAAAENVFFVAHSYGGLAFVELMIQREADVKSKVTAVALTDSVHNVWHQEAGKTIREWMRENCCNWVSSSEPLDTSVESMLPDCPRVSAGTDRHELTSWKSFPSIFKFFAEASEAKSSSQKPALTRRSHRIKHEEL</sequence>
<accession>Q3TNH5</accession>
<accession>Q3TLW0</accession>
<feature type="signal peptide" evidence="1">
    <location>
        <begin position="1"/>
        <end position="18"/>
    </location>
</feature>
<feature type="chain" id="PRO_0000320932" description="Cotranscriptional regulator ARB2A">
    <location>
        <begin position="19"/>
        <end position="417"/>
    </location>
</feature>
<feature type="region of interest" description="Disordered" evidence="3">
    <location>
        <begin position="208"/>
        <end position="248"/>
    </location>
</feature>
<feature type="region of interest" description="Disordered" evidence="3">
    <location>
        <begin position="398"/>
        <end position="417"/>
    </location>
</feature>
<feature type="short sequence motif" description="Prevents secretion from ER" evidence="2">
    <location>
        <begin position="414"/>
        <end position="417"/>
    </location>
</feature>
<feature type="compositionally biased region" description="Basic and acidic residues" evidence="3">
    <location>
        <begin position="224"/>
        <end position="237"/>
    </location>
</feature>
<feature type="compositionally biased region" description="Basic residues" evidence="3">
    <location>
        <begin position="405"/>
        <end position="417"/>
    </location>
</feature>
<feature type="active site" description="Nucleophile" evidence="7">
    <location>
        <position position="294"/>
    </location>
</feature>
<feature type="glycosylation site" description="N-linked (GlcNAc...) asparagine" evidence="1">
    <location>
        <position position="26"/>
    </location>
</feature>
<feature type="splice variant" id="VSP_031750" description="In isoform 2." evidence="5">
    <location>
        <begin position="1"/>
        <end position="138"/>
    </location>
</feature>
<feature type="splice variant" id="VSP_031751" description="In isoform 3." evidence="5">
    <location>
        <begin position="1"/>
        <end position="46"/>
    </location>
</feature>
<feature type="splice variant" id="VSP_031752" description="In isoform 3." evidence="5">
    <location>
        <begin position="126"/>
        <end position="189"/>
    </location>
</feature>
<feature type="mutagenesis site" description="Fails to interact with AGO2. Decreases nuclear localization." evidence="4">
    <original>E</original>
    <variation>Q</variation>
    <location>
        <position position="229"/>
    </location>
</feature>
<feature type="mutagenesis site" description="Loss of nucleophilicity of Ser-294." evidence="4">
    <original>S</original>
    <variation>A</variation>
    <location>
        <position position="294"/>
    </location>
</feature>
<feature type="mutagenesis site" description="Fails to interact with AGO2." evidence="4">
    <location>
        <begin position="307"/>
        <end position="417"/>
    </location>
</feature>
<comment type="function">
    <text evidence="4">Plays a role in the regulation of alternative splicing, by interacting with AGO2 and CHD7. Seems to be required for stabilizing protein-protein interactions at the chromatin-spliceosome interface (PubMed:29311329). May have hydrolase activity (PubMed:29311329).</text>
</comment>
<comment type="subunit">
    <text evidence="4">Interacts with AGO2 (PubMed:29311329). Found in a complex, composed of AGO2, CHD7 and ARB2A (PubMed:29311329).</text>
</comment>
<comment type="subcellular location">
    <subcellularLocation>
        <location evidence="4">Nucleus</location>
    </subcellularLocation>
    <subcellularLocation>
        <location evidence="4">Cytoplasm</location>
    </subcellularLocation>
    <subcellularLocation>
        <location evidence="4">Endoplasmic reticulum</location>
    </subcellularLocation>
</comment>
<comment type="alternative products">
    <event type="alternative splicing"/>
    <isoform>
        <id>Q3TNH5-1</id>
        <name>1</name>
        <sequence type="displayed"/>
    </isoform>
    <isoform>
        <id>Q3TNH5-2</id>
        <name>2</name>
        <sequence type="described" ref="VSP_031750"/>
    </isoform>
    <isoform>
        <id>Q3TNH5-3</id>
        <name>3</name>
        <sequence type="described" ref="VSP_031751 VSP_031752"/>
    </isoform>
</comment>
<comment type="developmental stage">
    <text evidence="4">Widely expressed during development.</text>
</comment>
<comment type="disruption phenotype">
    <text evidence="4">Homozygotes deficient mice die before postnatal day 25. Mice display retinal coloboma, cleft palate, and hypoplastic semicircular canals, retarded growth, genital anomalies and malformation of the heart and cranial nerves. Mice display a complex phenotype mimicking both the major and minor features of CHARGE syndrome (CHARGES).</text>
</comment>
<comment type="similarity">
    <text evidence="6">Belongs to the ARB2A family.</text>
</comment>
<proteinExistence type="evidence at protein level"/>
<dbReference type="EMBL" id="AK165273">
    <property type="protein sequence ID" value="BAE38114.1"/>
    <property type="molecule type" value="mRNA"/>
</dbReference>
<dbReference type="EMBL" id="AK166285">
    <property type="protein sequence ID" value="BAE38682.1"/>
    <property type="molecule type" value="mRNA"/>
</dbReference>
<dbReference type="EMBL" id="AC167171">
    <property type="status" value="NOT_ANNOTATED_CDS"/>
    <property type="molecule type" value="Genomic_DNA"/>
</dbReference>
<dbReference type="EMBL" id="AC154584">
    <property type="status" value="NOT_ANNOTATED_CDS"/>
    <property type="molecule type" value="Genomic_DNA"/>
</dbReference>
<dbReference type="EMBL" id="AC154548">
    <property type="status" value="NOT_ANNOTATED_CDS"/>
    <property type="molecule type" value="Genomic_DNA"/>
</dbReference>
<dbReference type="EMBL" id="CT025642">
    <property type="status" value="NOT_ANNOTATED_CDS"/>
    <property type="molecule type" value="Genomic_DNA"/>
</dbReference>
<dbReference type="CCDS" id="CCDS49317.1">
    <molecule id="Q3TNH5-1"/>
</dbReference>
<dbReference type="CCDS" id="CCDS49319.1">
    <molecule id="Q3TNH5-3"/>
</dbReference>
<dbReference type="RefSeq" id="NP_001156892.1">
    <molecule id="Q3TNH5-3"/>
    <property type="nucleotide sequence ID" value="NM_001163420.1"/>
</dbReference>
<dbReference type="RefSeq" id="NP_612185.1">
    <molecule id="Q3TNH5-1"/>
    <property type="nucleotide sequence ID" value="NM_138312.1"/>
</dbReference>
<dbReference type="RefSeq" id="XP_036014038.1">
    <molecule id="Q3TNH5-2"/>
    <property type="nucleotide sequence ID" value="XM_036158145.1"/>
</dbReference>
<dbReference type="SMR" id="Q3TNH5"/>
<dbReference type="FunCoup" id="Q3TNH5">
    <property type="interactions" value="5376"/>
</dbReference>
<dbReference type="STRING" id="10090.ENSMUSP00000133140"/>
<dbReference type="ESTHER" id="mouse-f172a">
    <property type="family name" value="Arb2_FAM172A"/>
</dbReference>
<dbReference type="GlyCosmos" id="Q3TNH5">
    <property type="glycosylation" value="1 site, No reported glycans"/>
</dbReference>
<dbReference type="GlyGen" id="Q3TNH5">
    <property type="glycosylation" value="1 site"/>
</dbReference>
<dbReference type="iPTMnet" id="Q3TNH5"/>
<dbReference type="PhosphoSitePlus" id="Q3TNH5"/>
<dbReference type="PaxDb" id="10090-ENSMUSP00000133140"/>
<dbReference type="PeptideAtlas" id="Q3TNH5"/>
<dbReference type="ProteomicsDB" id="267682">
    <molecule id="Q3TNH5-1"/>
</dbReference>
<dbReference type="ProteomicsDB" id="267683">
    <molecule id="Q3TNH5-2"/>
</dbReference>
<dbReference type="ProteomicsDB" id="267684">
    <molecule id="Q3TNH5-3"/>
</dbReference>
<dbReference type="Pumba" id="Q3TNH5"/>
<dbReference type="Antibodypedia" id="2355">
    <property type="antibodies" value="44 antibodies from 14 providers"/>
</dbReference>
<dbReference type="Ensembl" id="ENSMUST00000099358.5">
    <molecule id="Q3TNH5-3"/>
    <property type="protein sequence ID" value="ENSMUSP00000096960.4"/>
    <property type="gene ID" value="ENSMUSG00000064138.15"/>
</dbReference>
<dbReference type="Ensembl" id="ENSMUST00000163257.9">
    <molecule id="Q3TNH5-1"/>
    <property type="protein sequence ID" value="ENSMUSP00000133140.2"/>
    <property type="gene ID" value="ENSMUSG00000064138.15"/>
</dbReference>
<dbReference type="GeneID" id="68675"/>
<dbReference type="KEGG" id="mmu:68675"/>
<dbReference type="UCSC" id="uc007rgy.2">
    <molecule id="Q3TNH5-1"/>
    <property type="organism name" value="mouse"/>
</dbReference>
<dbReference type="UCSC" id="uc007rha.2">
    <molecule id="Q3TNH5-3"/>
    <property type="organism name" value="mouse"/>
</dbReference>
<dbReference type="AGR" id="MGI:1915925"/>
<dbReference type="CTD" id="83989"/>
<dbReference type="MGI" id="MGI:1915925">
    <property type="gene designation" value="Arb2a"/>
</dbReference>
<dbReference type="VEuPathDB" id="HostDB:ENSMUSG00000064138"/>
<dbReference type="eggNOG" id="KOG3967">
    <property type="taxonomic scope" value="Eukaryota"/>
</dbReference>
<dbReference type="GeneTree" id="ENSGT00530000063907"/>
<dbReference type="HOGENOM" id="CLU_048484_2_0_1"/>
<dbReference type="InParanoid" id="Q3TNH5"/>
<dbReference type="OrthoDB" id="421951at2759"/>
<dbReference type="PhylomeDB" id="Q3TNH5"/>
<dbReference type="TreeFam" id="TF315960"/>
<dbReference type="BioGRID-ORCS" id="68675">
    <property type="hits" value="0 hits in 76 CRISPR screens"/>
</dbReference>
<dbReference type="ChiTaRS" id="Fam172a">
    <property type="organism name" value="mouse"/>
</dbReference>
<dbReference type="PRO" id="PR:Q3TNH5"/>
<dbReference type="Proteomes" id="UP000000589">
    <property type="component" value="Chromosome 13"/>
</dbReference>
<dbReference type="RNAct" id="Q3TNH5">
    <property type="molecule type" value="protein"/>
</dbReference>
<dbReference type="Bgee" id="ENSMUSG00000064138">
    <property type="expression patterns" value="Expressed in spermatocyte and 224 other cell types or tissues"/>
</dbReference>
<dbReference type="ExpressionAtlas" id="Q3TNH5">
    <property type="expression patterns" value="baseline and differential"/>
</dbReference>
<dbReference type="GO" id="GO:0005737">
    <property type="term" value="C:cytoplasm"/>
    <property type="evidence" value="ECO:0000314"/>
    <property type="project" value="UniProtKB"/>
</dbReference>
<dbReference type="GO" id="GO:0005783">
    <property type="term" value="C:endoplasmic reticulum"/>
    <property type="evidence" value="ECO:0000314"/>
    <property type="project" value="UniProtKB"/>
</dbReference>
<dbReference type="GO" id="GO:0005634">
    <property type="term" value="C:nucleus"/>
    <property type="evidence" value="ECO:0000314"/>
    <property type="project" value="UniProtKB"/>
</dbReference>
<dbReference type="GO" id="GO:0006397">
    <property type="term" value="P:mRNA processing"/>
    <property type="evidence" value="ECO:0007669"/>
    <property type="project" value="UniProtKB-KW"/>
</dbReference>
<dbReference type="GO" id="GO:0014032">
    <property type="term" value="P:neural crest cell development"/>
    <property type="evidence" value="ECO:0000315"/>
    <property type="project" value="UniProtKB"/>
</dbReference>
<dbReference type="GO" id="GO:0000381">
    <property type="term" value="P:regulation of alternative mRNA splicing, via spliceosome"/>
    <property type="evidence" value="ECO:0000314"/>
    <property type="project" value="UniProtKB"/>
</dbReference>
<dbReference type="GO" id="GO:0008380">
    <property type="term" value="P:RNA splicing"/>
    <property type="evidence" value="ECO:0007669"/>
    <property type="project" value="UniProtKB-KW"/>
</dbReference>
<dbReference type="InterPro" id="IPR029058">
    <property type="entry name" value="AB_hydrolase_fold"/>
</dbReference>
<dbReference type="InterPro" id="IPR048263">
    <property type="entry name" value="Arb2"/>
</dbReference>
<dbReference type="InterPro" id="IPR053858">
    <property type="entry name" value="Arb2_dom"/>
</dbReference>
<dbReference type="PANTHER" id="PTHR21357:SF3">
    <property type="entry name" value="COTRANSCRIPTIONAL REGULATOR FAM172A"/>
    <property type="match status" value="1"/>
</dbReference>
<dbReference type="PANTHER" id="PTHR21357">
    <property type="entry name" value="FAM172 FAMILY PROTEIN HOMOLOG CG10038"/>
    <property type="match status" value="1"/>
</dbReference>
<dbReference type="Pfam" id="PF22749">
    <property type="entry name" value="Arb2"/>
    <property type="match status" value="1"/>
</dbReference>
<dbReference type="SUPFAM" id="SSF53474">
    <property type="entry name" value="alpha/beta-Hydrolases"/>
    <property type="match status" value="1"/>
</dbReference>
<dbReference type="PROSITE" id="PS00014">
    <property type="entry name" value="ER_TARGET"/>
    <property type="match status" value="1"/>
</dbReference>
<protein>
    <recommendedName>
        <fullName evidence="6">Cotranscriptional regulator ARB2A</fullName>
    </recommendedName>
    <alternativeName>
        <fullName evidence="6">Cotranscriptional regulator FAM172A</fullName>
    </alternativeName>
    <alternativeName>
        <fullName>Protein FAM172A</fullName>
    </alternativeName>
</protein>
<gene>
    <name type="primary">Arb2a</name>
    <name evidence="8" type="synonym">Fam172a</name>
</gene>
<keyword id="KW-0025">Alternative splicing</keyword>
<keyword id="KW-0963">Cytoplasm</keyword>
<keyword id="KW-0225">Disease variant</keyword>
<keyword id="KW-0256">Endoplasmic reticulum</keyword>
<keyword id="KW-0325">Glycoprotein</keyword>
<keyword id="KW-0507">mRNA processing</keyword>
<keyword id="KW-0508">mRNA splicing</keyword>
<keyword id="KW-0539">Nucleus</keyword>
<keyword id="KW-1185">Reference proteome</keyword>
<keyword id="KW-0732">Signal</keyword>
<organism>
    <name type="scientific">Mus musculus</name>
    <name type="common">Mouse</name>
    <dbReference type="NCBI Taxonomy" id="10090"/>
    <lineage>
        <taxon>Eukaryota</taxon>
        <taxon>Metazoa</taxon>
        <taxon>Chordata</taxon>
        <taxon>Craniata</taxon>
        <taxon>Vertebrata</taxon>
        <taxon>Euteleostomi</taxon>
        <taxon>Mammalia</taxon>
        <taxon>Eutheria</taxon>
        <taxon>Euarchontoglires</taxon>
        <taxon>Glires</taxon>
        <taxon>Rodentia</taxon>
        <taxon>Myomorpha</taxon>
        <taxon>Muroidea</taxon>
        <taxon>Muridae</taxon>
        <taxon>Murinae</taxon>
        <taxon>Mus</taxon>
        <taxon>Mus</taxon>
    </lineage>
</organism>
<name>ARB2A_MOUSE</name>
<evidence type="ECO:0000255" key="1"/>
<evidence type="ECO:0000255" key="2">
    <source>
        <dbReference type="PROSITE-ProRule" id="PRU10138"/>
    </source>
</evidence>
<evidence type="ECO:0000256" key="3">
    <source>
        <dbReference type="SAM" id="MobiDB-lite"/>
    </source>
</evidence>
<evidence type="ECO:0000269" key="4">
    <source>
    </source>
</evidence>
<evidence type="ECO:0000303" key="5">
    <source>
    </source>
</evidence>
<evidence type="ECO:0000305" key="6"/>
<evidence type="ECO:0000305" key="7">
    <source>
    </source>
</evidence>
<evidence type="ECO:0000312" key="8">
    <source>
        <dbReference type="MGI" id="MGI:1915925"/>
    </source>
</evidence>